<keyword id="KW-1185">Reference proteome</keyword>
<keyword id="KW-0687">Ribonucleoprotein</keyword>
<keyword id="KW-0689">Ribosomal protein</keyword>
<keyword id="KW-0694">RNA-binding</keyword>
<keyword id="KW-0699">rRNA-binding</keyword>
<accession>B4SBV8</accession>
<evidence type="ECO:0000255" key="1">
    <source>
        <dbReference type="HAMAP-Rule" id="MF_01326"/>
    </source>
</evidence>
<evidence type="ECO:0000256" key="2">
    <source>
        <dbReference type="SAM" id="MobiDB-lite"/>
    </source>
</evidence>
<evidence type="ECO:0000305" key="3"/>
<sequence length="80" mass="8989">MKTGIKKVKLHVKKNDSVVVISGNDKGKEGKILKVFPIKSRVIVEGVNIRKRHMRPTQGQTQGSIIEREFPIHSSNVKKS</sequence>
<feature type="chain" id="PRO_0000355704" description="Large ribosomal subunit protein uL24">
    <location>
        <begin position="1"/>
        <end position="80"/>
    </location>
</feature>
<feature type="region of interest" description="Disordered" evidence="2">
    <location>
        <begin position="53"/>
        <end position="80"/>
    </location>
</feature>
<proteinExistence type="inferred from homology"/>
<dbReference type="EMBL" id="CP001110">
    <property type="protein sequence ID" value="ACF42633.1"/>
    <property type="molecule type" value="Genomic_DNA"/>
</dbReference>
<dbReference type="RefSeq" id="WP_012507129.1">
    <property type="nucleotide sequence ID" value="NC_011060.1"/>
</dbReference>
<dbReference type="SMR" id="B4SBV8"/>
<dbReference type="STRING" id="324925.Ppha_0300"/>
<dbReference type="KEGG" id="pph:Ppha_0300"/>
<dbReference type="eggNOG" id="COG0198">
    <property type="taxonomic scope" value="Bacteria"/>
</dbReference>
<dbReference type="HOGENOM" id="CLU_093315_3_0_10"/>
<dbReference type="OrthoDB" id="9807419at2"/>
<dbReference type="Proteomes" id="UP000002724">
    <property type="component" value="Chromosome"/>
</dbReference>
<dbReference type="GO" id="GO:1990904">
    <property type="term" value="C:ribonucleoprotein complex"/>
    <property type="evidence" value="ECO:0007669"/>
    <property type="project" value="UniProtKB-KW"/>
</dbReference>
<dbReference type="GO" id="GO:0005840">
    <property type="term" value="C:ribosome"/>
    <property type="evidence" value="ECO:0007669"/>
    <property type="project" value="UniProtKB-KW"/>
</dbReference>
<dbReference type="GO" id="GO:0019843">
    <property type="term" value="F:rRNA binding"/>
    <property type="evidence" value="ECO:0007669"/>
    <property type="project" value="UniProtKB-UniRule"/>
</dbReference>
<dbReference type="GO" id="GO:0003735">
    <property type="term" value="F:structural constituent of ribosome"/>
    <property type="evidence" value="ECO:0007669"/>
    <property type="project" value="InterPro"/>
</dbReference>
<dbReference type="GO" id="GO:0006412">
    <property type="term" value="P:translation"/>
    <property type="evidence" value="ECO:0007669"/>
    <property type="project" value="UniProtKB-UniRule"/>
</dbReference>
<dbReference type="CDD" id="cd06089">
    <property type="entry name" value="KOW_RPL26"/>
    <property type="match status" value="1"/>
</dbReference>
<dbReference type="Gene3D" id="2.30.30.30">
    <property type="match status" value="1"/>
</dbReference>
<dbReference type="HAMAP" id="MF_01326_B">
    <property type="entry name" value="Ribosomal_uL24_B"/>
    <property type="match status" value="1"/>
</dbReference>
<dbReference type="InterPro" id="IPR005824">
    <property type="entry name" value="KOW"/>
</dbReference>
<dbReference type="InterPro" id="IPR014722">
    <property type="entry name" value="Rib_uL2_dom2"/>
</dbReference>
<dbReference type="InterPro" id="IPR003256">
    <property type="entry name" value="Ribosomal_uL24"/>
</dbReference>
<dbReference type="InterPro" id="IPR005825">
    <property type="entry name" value="Ribosomal_uL24_CS"/>
</dbReference>
<dbReference type="InterPro" id="IPR041988">
    <property type="entry name" value="Ribosomal_uL24_KOW"/>
</dbReference>
<dbReference type="InterPro" id="IPR008991">
    <property type="entry name" value="Translation_prot_SH3-like_sf"/>
</dbReference>
<dbReference type="NCBIfam" id="TIGR01079">
    <property type="entry name" value="rplX_bact"/>
    <property type="match status" value="1"/>
</dbReference>
<dbReference type="PANTHER" id="PTHR12903">
    <property type="entry name" value="MITOCHONDRIAL RIBOSOMAL PROTEIN L24"/>
    <property type="match status" value="1"/>
</dbReference>
<dbReference type="Pfam" id="PF00467">
    <property type="entry name" value="KOW"/>
    <property type="match status" value="1"/>
</dbReference>
<dbReference type="Pfam" id="PF17136">
    <property type="entry name" value="ribosomal_L24"/>
    <property type="match status" value="1"/>
</dbReference>
<dbReference type="SMART" id="SM00739">
    <property type="entry name" value="KOW"/>
    <property type="match status" value="1"/>
</dbReference>
<dbReference type="SUPFAM" id="SSF50104">
    <property type="entry name" value="Translation proteins SH3-like domain"/>
    <property type="match status" value="1"/>
</dbReference>
<dbReference type="PROSITE" id="PS01108">
    <property type="entry name" value="RIBOSOMAL_L24"/>
    <property type="match status" value="1"/>
</dbReference>
<protein>
    <recommendedName>
        <fullName evidence="1">Large ribosomal subunit protein uL24</fullName>
    </recommendedName>
    <alternativeName>
        <fullName evidence="3">50S ribosomal protein L24</fullName>
    </alternativeName>
</protein>
<comment type="function">
    <text evidence="1">One of two assembly initiator proteins, it binds directly to the 5'-end of the 23S rRNA, where it nucleates assembly of the 50S subunit.</text>
</comment>
<comment type="function">
    <text evidence="1">One of the proteins that surrounds the polypeptide exit tunnel on the outside of the subunit.</text>
</comment>
<comment type="subunit">
    <text evidence="1">Part of the 50S ribosomal subunit.</text>
</comment>
<comment type="similarity">
    <text evidence="1">Belongs to the universal ribosomal protein uL24 family.</text>
</comment>
<reference key="1">
    <citation type="submission" date="2008-06" db="EMBL/GenBank/DDBJ databases">
        <title>Complete sequence of Pelodictyon phaeoclathratiforme BU-1.</title>
        <authorList>
            <consortium name="US DOE Joint Genome Institute"/>
            <person name="Lucas S."/>
            <person name="Copeland A."/>
            <person name="Lapidus A."/>
            <person name="Glavina del Rio T."/>
            <person name="Dalin E."/>
            <person name="Tice H."/>
            <person name="Bruce D."/>
            <person name="Goodwin L."/>
            <person name="Pitluck S."/>
            <person name="Schmutz J."/>
            <person name="Larimer F."/>
            <person name="Land M."/>
            <person name="Hauser L."/>
            <person name="Kyrpides N."/>
            <person name="Mikhailova N."/>
            <person name="Liu Z."/>
            <person name="Li T."/>
            <person name="Zhao F."/>
            <person name="Overmann J."/>
            <person name="Bryant D.A."/>
            <person name="Richardson P."/>
        </authorList>
    </citation>
    <scope>NUCLEOTIDE SEQUENCE [LARGE SCALE GENOMIC DNA]</scope>
    <source>
        <strain>DSM 5477 / BU-1</strain>
    </source>
</reference>
<name>RL24_PELPB</name>
<organism>
    <name type="scientific">Pelodictyon phaeoclathratiforme (strain DSM 5477 / BU-1)</name>
    <dbReference type="NCBI Taxonomy" id="324925"/>
    <lineage>
        <taxon>Bacteria</taxon>
        <taxon>Pseudomonadati</taxon>
        <taxon>Chlorobiota</taxon>
        <taxon>Chlorobiia</taxon>
        <taxon>Chlorobiales</taxon>
        <taxon>Chlorobiaceae</taxon>
        <taxon>Chlorobium/Pelodictyon group</taxon>
        <taxon>Pelodictyon</taxon>
    </lineage>
</organism>
<gene>
    <name evidence="1" type="primary">rplX</name>
    <name type="ordered locus">Ppha_0300</name>
</gene>